<dbReference type="EC" id="3.5.1.103" evidence="1"/>
<dbReference type="EMBL" id="CP000479">
    <property type="protein sequence ID" value="ABK67372.1"/>
    <property type="molecule type" value="Genomic_DNA"/>
</dbReference>
<dbReference type="RefSeq" id="WP_009975503.1">
    <property type="nucleotide sequence ID" value="NC_008595.1"/>
</dbReference>
<dbReference type="SMR" id="A0QCB7"/>
<dbReference type="KEGG" id="mav:MAV_1310"/>
<dbReference type="HOGENOM" id="CLU_049311_2_1_11"/>
<dbReference type="Proteomes" id="UP000001574">
    <property type="component" value="Chromosome"/>
</dbReference>
<dbReference type="GO" id="GO:0035595">
    <property type="term" value="F:N-acetylglucosaminylinositol deacetylase activity"/>
    <property type="evidence" value="ECO:0007669"/>
    <property type="project" value="UniProtKB-EC"/>
</dbReference>
<dbReference type="GO" id="GO:0008270">
    <property type="term" value="F:zinc ion binding"/>
    <property type="evidence" value="ECO:0007669"/>
    <property type="project" value="UniProtKB-UniRule"/>
</dbReference>
<dbReference type="GO" id="GO:0010125">
    <property type="term" value="P:mycothiol biosynthetic process"/>
    <property type="evidence" value="ECO:0007669"/>
    <property type="project" value="UniProtKB-UniRule"/>
</dbReference>
<dbReference type="Gene3D" id="3.40.50.10320">
    <property type="entry name" value="LmbE-like"/>
    <property type="match status" value="1"/>
</dbReference>
<dbReference type="HAMAP" id="MF_01696">
    <property type="entry name" value="MshB"/>
    <property type="match status" value="1"/>
</dbReference>
<dbReference type="InterPro" id="IPR003737">
    <property type="entry name" value="GlcNAc_PI_deacetylase-related"/>
</dbReference>
<dbReference type="InterPro" id="IPR024078">
    <property type="entry name" value="LmbE-like_dom_sf"/>
</dbReference>
<dbReference type="InterPro" id="IPR017810">
    <property type="entry name" value="Mycothiol_biosynthesis_MshB"/>
</dbReference>
<dbReference type="NCBIfam" id="TIGR03445">
    <property type="entry name" value="mycothiol_MshB"/>
    <property type="match status" value="1"/>
</dbReference>
<dbReference type="PANTHER" id="PTHR12993:SF26">
    <property type="entry name" value="1D-MYO-INOSITOL 2-ACETAMIDO-2-DEOXY-ALPHA-D-GLUCOPYRANOSIDE DEACETYLASE"/>
    <property type="match status" value="1"/>
</dbReference>
<dbReference type="PANTHER" id="PTHR12993">
    <property type="entry name" value="N-ACETYLGLUCOSAMINYL-PHOSPHATIDYLINOSITOL DE-N-ACETYLASE-RELATED"/>
    <property type="match status" value="1"/>
</dbReference>
<dbReference type="Pfam" id="PF02585">
    <property type="entry name" value="PIG-L"/>
    <property type="match status" value="1"/>
</dbReference>
<dbReference type="SUPFAM" id="SSF102588">
    <property type="entry name" value="LmbE-like"/>
    <property type="match status" value="1"/>
</dbReference>
<sequence length="300" mass="31911">MAETPRLLFVHAHPDDESLGTGATIAHYTAAGADVRVVTCTLGEEGEVIGERWAELAVDRADQLGGYRIGELTAALRELGVGEPCYLGGAGRWRDSGMPGTPKRRRQRFIDADEREAVGALVAVIREQRPHVVVGYDPAGGYGHPDHVHVHTVTTAAVAAAGAGDFPGEPWAVPKFYWSVFATRPFEAAVQALTPEDLRPDWSMPSAEQFTFGYADDHIDAVVAAGPHAWAAKRAALAAHATQVVVGPTGRACALSNNVALPILDEEHYVLVAGAAGARDERGWETDLLAGLEFGAAPRR</sequence>
<feature type="chain" id="PRO_0000400193" description="1D-myo-inositol 2-acetamido-2-deoxy-alpha-D-glucopyranoside deacetylase">
    <location>
        <begin position="1"/>
        <end position="300"/>
    </location>
</feature>
<feature type="binding site" evidence="1">
    <location>
        <position position="13"/>
    </location>
    <ligand>
        <name>Zn(2+)</name>
        <dbReference type="ChEBI" id="CHEBI:29105"/>
    </ligand>
</feature>
<feature type="binding site" evidence="1">
    <location>
        <position position="16"/>
    </location>
    <ligand>
        <name>Zn(2+)</name>
        <dbReference type="ChEBI" id="CHEBI:29105"/>
    </ligand>
</feature>
<feature type="binding site" evidence="1">
    <location>
        <position position="147"/>
    </location>
    <ligand>
        <name>Zn(2+)</name>
        <dbReference type="ChEBI" id="CHEBI:29105"/>
    </ligand>
</feature>
<proteinExistence type="inferred from homology"/>
<reference key="1">
    <citation type="submission" date="2006-10" db="EMBL/GenBank/DDBJ databases">
        <authorList>
            <person name="Fleischmann R.D."/>
            <person name="Dodson R.J."/>
            <person name="Haft D.H."/>
            <person name="Merkel J.S."/>
            <person name="Nelson W.C."/>
            <person name="Fraser C.M."/>
        </authorList>
    </citation>
    <scope>NUCLEOTIDE SEQUENCE [LARGE SCALE GENOMIC DNA]</scope>
    <source>
        <strain>104</strain>
    </source>
</reference>
<name>MSHB_MYCA1</name>
<gene>
    <name evidence="1" type="primary">mshB</name>
    <name type="ordered locus">MAV_1310</name>
</gene>
<comment type="function">
    <text evidence="1">Catalyzes the deacetylation of 1D-myo-inositol 2-acetamido-2-deoxy-alpha-D-glucopyranoside (GlcNAc-Ins) in the mycothiol biosynthesis pathway.</text>
</comment>
<comment type="catalytic activity">
    <reaction evidence="1">
        <text>1D-myo-inositol 2-acetamido-2-deoxy-alpha-D-glucopyranoside + H2O = 1D-myo-inositol 2-amino-2-deoxy-alpha-D-glucopyranoside + acetate</text>
        <dbReference type="Rhea" id="RHEA:26180"/>
        <dbReference type="ChEBI" id="CHEBI:15377"/>
        <dbReference type="ChEBI" id="CHEBI:30089"/>
        <dbReference type="ChEBI" id="CHEBI:52442"/>
        <dbReference type="ChEBI" id="CHEBI:58886"/>
        <dbReference type="EC" id="3.5.1.103"/>
    </reaction>
</comment>
<comment type="cofactor">
    <cofactor evidence="1">
        <name>Zn(2+)</name>
        <dbReference type="ChEBI" id="CHEBI:29105"/>
    </cofactor>
    <text evidence="1">Binds 1 zinc ion per subunit.</text>
</comment>
<comment type="similarity">
    <text evidence="1">Belongs to the MshB deacetylase family.</text>
</comment>
<evidence type="ECO:0000255" key="1">
    <source>
        <dbReference type="HAMAP-Rule" id="MF_01696"/>
    </source>
</evidence>
<protein>
    <recommendedName>
        <fullName evidence="1">1D-myo-inositol 2-acetamido-2-deoxy-alpha-D-glucopyranoside deacetylase</fullName>
        <shortName evidence="1">GlcNAc-Ins deacetylase</shortName>
        <ecNumber evidence="1">3.5.1.103</ecNumber>
    </recommendedName>
    <alternativeName>
        <fullName>N-acetyl-1-D-myo-inositol 2-amino-2-deoxy-alpha-D-glucopyranoside deacetylase</fullName>
    </alternativeName>
</protein>
<organism>
    <name type="scientific">Mycobacterium avium (strain 104)</name>
    <dbReference type="NCBI Taxonomy" id="243243"/>
    <lineage>
        <taxon>Bacteria</taxon>
        <taxon>Bacillati</taxon>
        <taxon>Actinomycetota</taxon>
        <taxon>Actinomycetes</taxon>
        <taxon>Mycobacteriales</taxon>
        <taxon>Mycobacteriaceae</taxon>
        <taxon>Mycobacterium</taxon>
        <taxon>Mycobacterium avium complex (MAC)</taxon>
    </lineage>
</organism>
<keyword id="KW-0378">Hydrolase</keyword>
<keyword id="KW-0479">Metal-binding</keyword>
<keyword id="KW-0862">Zinc</keyword>
<accession>A0QCB7</accession>